<protein>
    <recommendedName>
        <fullName evidence="1">CinA-like protein</fullName>
    </recommendedName>
</protein>
<sequence>MMKLEMVCTGEEVLSGQIVDTNAAWFASTMMEHGIEIQRRVTVGDRLEDLIAVFQERSLHADVILVNGGLGPTSDDMSAEAMAKAKGESLVENREWRQHLEDWFTRNNREMPVSNLKQAMLPESAVMVDNPVGTACGFRVKLNRAWLFFTPGVPFELKHMVKEQFIPFIREEFGLDAKVALKKLLTIGHGESSLADKIEPLELPEGITIGYRSSMPHIEIKIFARGEKAIALLPRVTGHIKMVLGTAVVAEDKATLAEEIHAKLLNSGLTLSVAESCTGGMITSQLVDFPGSSSYLQHGLVTYSNESKVRVLGVNPATLDDHGAVSIPTVEEMAKGARAILDSDFALATSGIAGPDGGTEEKPVGTVAIALATRSGVYSQMIKLPRRSRDLVRSLSAAVAYDMLRRELLTEAVIVDYQSIGRFSK</sequence>
<reference key="1">
    <citation type="submission" date="2006-08" db="EMBL/GenBank/DDBJ databases">
        <title>Complete sequence of Shewanella sp. MR-4.</title>
        <authorList>
            <consortium name="US DOE Joint Genome Institute"/>
            <person name="Copeland A."/>
            <person name="Lucas S."/>
            <person name="Lapidus A."/>
            <person name="Barry K."/>
            <person name="Detter J.C."/>
            <person name="Glavina del Rio T."/>
            <person name="Hammon N."/>
            <person name="Israni S."/>
            <person name="Dalin E."/>
            <person name="Tice H."/>
            <person name="Pitluck S."/>
            <person name="Kiss H."/>
            <person name="Brettin T."/>
            <person name="Bruce D."/>
            <person name="Han C."/>
            <person name="Tapia R."/>
            <person name="Gilna P."/>
            <person name="Schmutz J."/>
            <person name="Larimer F."/>
            <person name="Land M."/>
            <person name="Hauser L."/>
            <person name="Kyrpides N."/>
            <person name="Mikhailova N."/>
            <person name="Nealson K."/>
            <person name="Konstantinidis K."/>
            <person name="Klappenbach J."/>
            <person name="Tiedje J."/>
            <person name="Richardson P."/>
        </authorList>
    </citation>
    <scope>NUCLEOTIDE SEQUENCE [LARGE SCALE GENOMIC DNA]</scope>
    <source>
        <strain>MR-4</strain>
    </source>
</reference>
<comment type="similarity">
    <text evidence="1">Belongs to the CinA family.</text>
</comment>
<proteinExistence type="inferred from homology"/>
<gene>
    <name type="ordered locus">Shewmr4_3712</name>
</gene>
<evidence type="ECO:0000255" key="1">
    <source>
        <dbReference type="HAMAP-Rule" id="MF_00226"/>
    </source>
</evidence>
<feature type="chain" id="PRO_1000058725" description="CinA-like protein">
    <location>
        <begin position="1"/>
        <end position="425"/>
    </location>
</feature>
<accession>Q0HDU2</accession>
<name>CINAL_SHESM</name>
<dbReference type="EMBL" id="CP000446">
    <property type="protein sequence ID" value="ABI40775.1"/>
    <property type="molecule type" value="Genomic_DNA"/>
</dbReference>
<dbReference type="SMR" id="Q0HDU2"/>
<dbReference type="KEGG" id="she:Shewmr4_3712"/>
<dbReference type="HOGENOM" id="CLU_030805_9_2_6"/>
<dbReference type="CDD" id="cd00885">
    <property type="entry name" value="cinA"/>
    <property type="match status" value="1"/>
</dbReference>
<dbReference type="Gene3D" id="3.90.950.20">
    <property type="entry name" value="CinA-like"/>
    <property type="match status" value="1"/>
</dbReference>
<dbReference type="Gene3D" id="3.40.980.10">
    <property type="entry name" value="MoaB/Mog-like domain"/>
    <property type="match status" value="1"/>
</dbReference>
<dbReference type="HAMAP" id="MF_00226_B">
    <property type="entry name" value="CinA_B"/>
    <property type="match status" value="1"/>
</dbReference>
<dbReference type="InterPro" id="IPR050101">
    <property type="entry name" value="CinA"/>
</dbReference>
<dbReference type="InterPro" id="IPR036653">
    <property type="entry name" value="CinA-like_C"/>
</dbReference>
<dbReference type="InterPro" id="IPR008136">
    <property type="entry name" value="CinA_C"/>
</dbReference>
<dbReference type="InterPro" id="IPR008135">
    <property type="entry name" value="Competence-induced_CinA"/>
</dbReference>
<dbReference type="InterPro" id="IPR036425">
    <property type="entry name" value="MoaB/Mog-like_dom_sf"/>
</dbReference>
<dbReference type="InterPro" id="IPR001453">
    <property type="entry name" value="MoaB/Mog_dom"/>
</dbReference>
<dbReference type="NCBIfam" id="TIGR00200">
    <property type="entry name" value="cinA_nterm"/>
    <property type="match status" value="1"/>
</dbReference>
<dbReference type="NCBIfam" id="TIGR00177">
    <property type="entry name" value="molyb_syn"/>
    <property type="match status" value="1"/>
</dbReference>
<dbReference type="NCBIfam" id="TIGR00199">
    <property type="entry name" value="PncC_domain"/>
    <property type="match status" value="1"/>
</dbReference>
<dbReference type="PANTHER" id="PTHR13939">
    <property type="entry name" value="NICOTINAMIDE-NUCLEOTIDE AMIDOHYDROLASE PNCC"/>
    <property type="match status" value="1"/>
</dbReference>
<dbReference type="PANTHER" id="PTHR13939:SF0">
    <property type="entry name" value="NMN AMIDOHYDROLASE-LIKE PROTEIN YFAY"/>
    <property type="match status" value="1"/>
</dbReference>
<dbReference type="Pfam" id="PF02464">
    <property type="entry name" value="CinA"/>
    <property type="match status" value="1"/>
</dbReference>
<dbReference type="Pfam" id="PF00994">
    <property type="entry name" value="MoCF_biosynth"/>
    <property type="match status" value="1"/>
</dbReference>
<dbReference type="PIRSF" id="PIRSF006728">
    <property type="entry name" value="CinA"/>
    <property type="match status" value="1"/>
</dbReference>
<dbReference type="SMART" id="SM00852">
    <property type="entry name" value="MoCF_biosynth"/>
    <property type="match status" value="1"/>
</dbReference>
<dbReference type="SUPFAM" id="SSF142433">
    <property type="entry name" value="CinA-like"/>
    <property type="match status" value="1"/>
</dbReference>
<dbReference type="SUPFAM" id="SSF53218">
    <property type="entry name" value="Molybdenum cofactor biosynthesis proteins"/>
    <property type="match status" value="1"/>
</dbReference>
<organism>
    <name type="scientific">Shewanella sp. (strain MR-4)</name>
    <dbReference type="NCBI Taxonomy" id="60480"/>
    <lineage>
        <taxon>Bacteria</taxon>
        <taxon>Pseudomonadati</taxon>
        <taxon>Pseudomonadota</taxon>
        <taxon>Gammaproteobacteria</taxon>
        <taxon>Alteromonadales</taxon>
        <taxon>Shewanellaceae</taxon>
        <taxon>Shewanella</taxon>
    </lineage>
</organism>